<organism>
    <name type="scientific">Mus musculus</name>
    <name type="common">Mouse</name>
    <dbReference type="NCBI Taxonomy" id="10090"/>
    <lineage>
        <taxon>Eukaryota</taxon>
        <taxon>Metazoa</taxon>
        <taxon>Chordata</taxon>
        <taxon>Craniata</taxon>
        <taxon>Vertebrata</taxon>
        <taxon>Euteleostomi</taxon>
        <taxon>Mammalia</taxon>
        <taxon>Eutheria</taxon>
        <taxon>Euarchontoglires</taxon>
        <taxon>Glires</taxon>
        <taxon>Rodentia</taxon>
        <taxon>Myomorpha</taxon>
        <taxon>Muroidea</taxon>
        <taxon>Muridae</taxon>
        <taxon>Murinae</taxon>
        <taxon>Mus</taxon>
        <taxon>Mus</taxon>
    </lineage>
</organism>
<dbReference type="EC" id="2.3.2.26" evidence="9"/>
<dbReference type="EMBL" id="AY550908">
    <property type="protein sequence ID" value="AAT28194.1"/>
    <property type="molecule type" value="mRNA"/>
</dbReference>
<dbReference type="EMBL" id="AK122398">
    <property type="protein sequence ID" value="BAC65680.1"/>
    <property type="molecule type" value="mRNA"/>
</dbReference>
<dbReference type="EMBL" id="BC049162">
    <property type="protein sequence ID" value="AAH49162.1"/>
    <property type="molecule type" value="mRNA"/>
</dbReference>
<dbReference type="EMBL" id="BC049224">
    <property type="protein sequence ID" value="AAH49224.1"/>
    <property type="molecule type" value="mRNA"/>
</dbReference>
<dbReference type="EMBL" id="BC057458">
    <property type="protein sequence ID" value="AAH57458.1"/>
    <property type="molecule type" value="mRNA"/>
</dbReference>
<dbReference type="EMBL" id="BC057923">
    <property type="protein sequence ID" value="AAH57923.1"/>
    <property type="molecule type" value="mRNA"/>
</dbReference>
<dbReference type="EMBL" id="AK014485">
    <property type="protein sequence ID" value="BAB29387.1"/>
    <property type="molecule type" value="mRNA"/>
</dbReference>
<dbReference type="CCDS" id="CCDS88751.1"/>
<dbReference type="RefSeq" id="NP_001074828.2">
    <property type="nucleotide sequence ID" value="NM_001081359.3"/>
</dbReference>
<dbReference type="RefSeq" id="NP_001106192.1">
    <property type="nucleotide sequence ID" value="NM_001112721.2"/>
</dbReference>
<dbReference type="SMR" id="Q80TP3"/>
<dbReference type="BioGRID" id="214255">
    <property type="interactions" value="39"/>
</dbReference>
<dbReference type="DIP" id="DIP-56890N"/>
<dbReference type="FunCoup" id="Q80TP3">
    <property type="interactions" value="5000"/>
</dbReference>
<dbReference type="IntAct" id="Q80TP3">
    <property type="interactions" value="13"/>
</dbReference>
<dbReference type="MINT" id="Q80TP3"/>
<dbReference type="STRING" id="10090.ENSMUSP00000154293"/>
<dbReference type="GlyGen" id="Q80TP3">
    <property type="glycosylation" value="2 sites, 1 N-linked glycan (1 site)"/>
</dbReference>
<dbReference type="iPTMnet" id="Q80TP3"/>
<dbReference type="PhosphoSitePlus" id="Q80TP3"/>
<dbReference type="SwissPalm" id="Q80TP3"/>
<dbReference type="jPOST" id="Q80TP3"/>
<dbReference type="PaxDb" id="10090-ENSMUSP00000105965"/>
<dbReference type="PeptideAtlas" id="Q80TP3"/>
<dbReference type="ProteomicsDB" id="300078"/>
<dbReference type="Pumba" id="Q80TP3"/>
<dbReference type="GeneID" id="70790"/>
<dbReference type="KEGG" id="mmu:70790"/>
<dbReference type="AGR" id="MGI:1918040"/>
<dbReference type="CTD" id="51366"/>
<dbReference type="MGI" id="MGI:1918040">
    <property type="gene designation" value="Ubr5"/>
</dbReference>
<dbReference type="eggNOG" id="KOG0943">
    <property type="taxonomic scope" value="Eukaryota"/>
</dbReference>
<dbReference type="InParanoid" id="Q80TP3"/>
<dbReference type="OrthoDB" id="298098at2759"/>
<dbReference type="PhylomeDB" id="Q80TP3"/>
<dbReference type="BRENDA" id="2.3.2.26">
    <property type="organism ID" value="3474"/>
</dbReference>
<dbReference type="UniPathway" id="UPA00143"/>
<dbReference type="BioGRID-ORCS" id="70790">
    <property type="hits" value="28 hits in 118 CRISPR screens"/>
</dbReference>
<dbReference type="ChiTaRS" id="Ubr5">
    <property type="organism name" value="mouse"/>
</dbReference>
<dbReference type="PRO" id="PR:Q80TP3"/>
<dbReference type="Proteomes" id="UP000000589">
    <property type="component" value="Unplaced"/>
</dbReference>
<dbReference type="RNAct" id="Q80TP3">
    <property type="molecule type" value="protein"/>
</dbReference>
<dbReference type="GO" id="GO:0005737">
    <property type="term" value="C:cytoplasm"/>
    <property type="evidence" value="ECO:0000250"/>
    <property type="project" value="UniProtKB"/>
</dbReference>
<dbReference type="GO" id="GO:0005634">
    <property type="term" value="C:nucleus"/>
    <property type="evidence" value="ECO:0000250"/>
    <property type="project" value="HGNC-UCL"/>
</dbReference>
<dbReference type="GO" id="GO:0048471">
    <property type="term" value="C:perinuclear region of cytoplasm"/>
    <property type="evidence" value="ECO:0000266"/>
    <property type="project" value="MGI"/>
</dbReference>
<dbReference type="GO" id="GO:0032991">
    <property type="term" value="C:protein-containing complex"/>
    <property type="evidence" value="ECO:0000266"/>
    <property type="project" value="MGI"/>
</dbReference>
<dbReference type="GO" id="GO:0003723">
    <property type="term" value="F:RNA binding"/>
    <property type="evidence" value="ECO:0007669"/>
    <property type="project" value="InterPro"/>
</dbReference>
<dbReference type="GO" id="GO:0043130">
    <property type="term" value="F:ubiquitin binding"/>
    <property type="evidence" value="ECO:0000250"/>
    <property type="project" value="UniProtKB"/>
</dbReference>
<dbReference type="GO" id="GO:0061630">
    <property type="term" value="F:ubiquitin protein ligase activity"/>
    <property type="evidence" value="ECO:0000314"/>
    <property type="project" value="UniProtKB"/>
</dbReference>
<dbReference type="GO" id="GO:0008270">
    <property type="term" value="F:zinc ion binding"/>
    <property type="evidence" value="ECO:0007669"/>
    <property type="project" value="UniProtKB-KW"/>
</dbReference>
<dbReference type="GO" id="GO:0071629">
    <property type="term" value="P:cytoplasm protein quality control by the ubiquitin-proteasome system"/>
    <property type="evidence" value="ECO:0000250"/>
    <property type="project" value="UniProtKB"/>
</dbReference>
<dbReference type="GO" id="GO:0006974">
    <property type="term" value="P:DNA damage response"/>
    <property type="evidence" value="ECO:0000250"/>
    <property type="project" value="HGNC-UCL"/>
</dbReference>
<dbReference type="GO" id="GO:0006281">
    <property type="term" value="P:DNA repair"/>
    <property type="evidence" value="ECO:0007669"/>
    <property type="project" value="UniProtKB-KW"/>
</dbReference>
<dbReference type="GO" id="GO:0140861">
    <property type="term" value="P:DNA repair-dependent chromatin remodeling"/>
    <property type="evidence" value="ECO:0000250"/>
    <property type="project" value="UniProtKB"/>
</dbReference>
<dbReference type="GO" id="GO:0033696">
    <property type="term" value="P:heterochromatin boundary formation"/>
    <property type="evidence" value="ECO:0000250"/>
    <property type="project" value="UniProtKB"/>
</dbReference>
<dbReference type="GO" id="GO:0032700">
    <property type="term" value="P:negative regulation of interleukin-17 production"/>
    <property type="evidence" value="ECO:0000316"/>
    <property type="project" value="MGI"/>
</dbReference>
<dbReference type="GO" id="GO:0045879">
    <property type="term" value="P:negative regulation of smoothened signaling pathway"/>
    <property type="evidence" value="ECO:0000315"/>
    <property type="project" value="UniProtKB"/>
</dbReference>
<dbReference type="GO" id="GO:0071630">
    <property type="term" value="P:nuclear protein quality control by the ubiquitin-proteasome system"/>
    <property type="evidence" value="ECO:0000250"/>
    <property type="project" value="UniProtKB"/>
</dbReference>
<dbReference type="GO" id="GO:0010628">
    <property type="term" value="P:positive regulation of gene expression"/>
    <property type="evidence" value="ECO:0000266"/>
    <property type="project" value="MGI"/>
</dbReference>
<dbReference type="GO" id="GO:0050847">
    <property type="term" value="P:progesterone receptor signaling pathway"/>
    <property type="evidence" value="ECO:0000250"/>
    <property type="project" value="HGNC-UCL"/>
</dbReference>
<dbReference type="GO" id="GO:0141198">
    <property type="term" value="P:protein branched polyubiquitination"/>
    <property type="evidence" value="ECO:0000250"/>
    <property type="project" value="UniProtKB"/>
</dbReference>
<dbReference type="GO" id="GO:0031647">
    <property type="term" value="P:regulation of protein stability"/>
    <property type="evidence" value="ECO:0000315"/>
    <property type="project" value="MGI"/>
</dbReference>
<dbReference type="GO" id="GO:0071596">
    <property type="term" value="P:ubiquitin-dependent protein catabolic process via the N-end rule pathway"/>
    <property type="evidence" value="ECO:0000314"/>
    <property type="project" value="UniProtKB"/>
</dbReference>
<dbReference type="CDD" id="cd14423">
    <property type="entry name" value="CUE_UBR5"/>
    <property type="match status" value="1"/>
</dbReference>
<dbReference type="CDD" id="cd19675">
    <property type="entry name" value="UBR-box_UBR5"/>
    <property type="match status" value="1"/>
</dbReference>
<dbReference type="FunFam" id="1.10.1900.10:FF:000002">
    <property type="entry name" value="E3 ubiquitin-protein ligase UBR5 isoform X1"/>
    <property type="match status" value="1"/>
</dbReference>
<dbReference type="FunFam" id="3.90.1750.10:FF:000011">
    <property type="entry name" value="E3 ubiquitin-protein ligase UBR5 isoform X1"/>
    <property type="match status" value="1"/>
</dbReference>
<dbReference type="FunFam" id="2.130.10.30:FF:000007">
    <property type="entry name" value="E3 ubiquitin-protein ligase UBR5 isoform X2"/>
    <property type="match status" value="1"/>
</dbReference>
<dbReference type="FunFam" id="3.30.2160.10:FF:000006">
    <property type="entry name" value="E3 ubiquitin-protein ligase UBR5 isoform X2"/>
    <property type="match status" value="1"/>
</dbReference>
<dbReference type="FunFam" id="3.90.1750.10:FF:000016">
    <property type="entry name" value="E3 ubiquitin-protein ligase UBR5 isoform X2"/>
    <property type="match status" value="1"/>
</dbReference>
<dbReference type="FunFam" id="1.10.8.10:FF:000009">
    <property type="entry name" value="Putative E3 ubiquitin-protein ligase UBR5"/>
    <property type="match status" value="1"/>
</dbReference>
<dbReference type="FunFam" id="3.30.2410.10:FF:000008">
    <property type="entry name" value="Putative E3 ubiquitin-protein ligase UBR5"/>
    <property type="match status" value="1"/>
</dbReference>
<dbReference type="Gene3D" id="1.10.1900.10">
    <property type="entry name" value="c-terminal domain of poly(a) binding protein"/>
    <property type="match status" value="1"/>
</dbReference>
<dbReference type="Gene3D" id="1.10.8.10">
    <property type="entry name" value="DNA helicase RuvA subunit, C-terminal domain"/>
    <property type="match status" value="1"/>
</dbReference>
<dbReference type="Gene3D" id="3.30.2160.10">
    <property type="entry name" value="Hect, E3 ligase catalytic domain"/>
    <property type="match status" value="1"/>
</dbReference>
<dbReference type="Gene3D" id="3.30.2410.10">
    <property type="entry name" value="Hect, E3 ligase catalytic domain"/>
    <property type="match status" value="1"/>
</dbReference>
<dbReference type="Gene3D" id="3.90.1750.10">
    <property type="entry name" value="Hect, E3 ligase catalytic domains"/>
    <property type="match status" value="1"/>
</dbReference>
<dbReference type="Gene3D" id="2.130.10.30">
    <property type="entry name" value="Regulator of chromosome condensation 1/beta-lactamase-inhibitor protein II"/>
    <property type="match status" value="1"/>
</dbReference>
<dbReference type="InterPro" id="IPR000569">
    <property type="entry name" value="HECT_dom"/>
</dbReference>
<dbReference type="InterPro" id="IPR035983">
    <property type="entry name" value="Hect_E3_ubiquitin_ligase"/>
</dbReference>
<dbReference type="InterPro" id="IPR036053">
    <property type="entry name" value="PABP-dom"/>
</dbReference>
<dbReference type="InterPro" id="IPR002004">
    <property type="entry name" value="PABP_HYD_C"/>
</dbReference>
<dbReference type="InterPro" id="IPR009091">
    <property type="entry name" value="RCC1/BLIP-II"/>
</dbReference>
<dbReference type="InterPro" id="IPR047503">
    <property type="entry name" value="UBR-box_UBR5"/>
</dbReference>
<dbReference type="InterPro" id="IPR024725">
    <property type="entry name" value="UBR5_UBA"/>
</dbReference>
<dbReference type="InterPro" id="IPR003126">
    <property type="entry name" value="Znf_UBR"/>
</dbReference>
<dbReference type="PANTHER" id="PTHR46276">
    <property type="entry name" value="E3 UBIQUITIN-PROTEIN LIGASE UBR5"/>
    <property type="match status" value="1"/>
</dbReference>
<dbReference type="PANTHER" id="PTHR46276:SF1">
    <property type="entry name" value="E3 UBIQUITIN-PROTEIN LIGASE UBR5"/>
    <property type="match status" value="1"/>
</dbReference>
<dbReference type="Pfam" id="PF11547">
    <property type="entry name" value="E3_UbLigase_EDD"/>
    <property type="match status" value="1"/>
</dbReference>
<dbReference type="Pfam" id="PF00632">
    <property type="entry name" value="HECT"/>
    <property type="match status" value="1"/>
</dbReference>
<dbReference type="Pfam" id="PF00658">
    <property type="entry name" value="MLLE"/>
    <property type="match status" value="1"/>
</dbReference>
<dbReference type="SMART" id="SM00119">
    <property type="entry name" value="HECTc"/>
    <property type="match status" value="1"/>
</dbReference>
<dbReference type="SMART" id="SM00517">
    <property type="entry name" value="PolyA"/>
    <property type="match status" value="1"/>
</dbReference>
<dbReference type="SMART" id="SM00396">
    <property type="entry name" value="ZnF_UBR1"/>
    <property type="match status" value="1"/>
</dbReference>
<dbReference type="SUPFAM" id="SSF56204">
    <property type="entry name" value="Hect, E3 ligase catalytic domain"/>
    <property type="match status" value="1"/>
</dbReference>
<dbReference type="SUPFAM" id="SSF63570">
    <property type="entry name" value="PABC (PABP) domain"/>
    <property type="match status" value="1"/>
</dbReference>
<dbReference type="SUPFAM" id="SSF50985">
    <property type="entry name" value="RCC1/BLIP-II"/>
    <property type="match status" value="1"/>
</dbReference>
<dbReference type="PROSITE" id="PS50237">
    <property type="entry name" value="HECT"/>
    <property type="match status" value="1"/>
</dbReference>
<dbReference type="PROSITE" id="PS51309">
    <property type="entry name" value="PABC"/>
    <property type="match status" value="1"/>
</dbReference>
<dbReference type="PROSITE" id="PS51157">
    <property type="entry name" value="ZF_UBR"/>
    <property type="match status" value="1"/>
</dbReference>
<reference key="1">
    <citation type="journal article" date="2004" name="Mol. Cell. Biol.">
        <title>Edd, the murine hyperplastic disc gene, is essential for yolk sac vascularization and chorioallantoic fusion.</title>
        <authorList>
            <person name="Saunders D.N."/>
            <person name="Hird S.L."/>
            <person name="Withington S.L."/>
            <person name="Dunwoodie S.L."/>
            <person name="Henderson M.J."/>
            <person name="Biben C."/>
            <person name="Sutherland R.L."/>
            <person name="Ormandy C.J."/>
            <person name="Watts C.K.W."/>
        </authorList>
    </citation>
    <scope>NUCLEOTIDE SEQUENCE [MRNA]</scope>
    <scope>FUNCTION</scope>
    <scope>DISRUPTION PHENOTYPE</scope>
    <source>
        <strain>C57BL/6J</strain>
    </source>
</reference>
<reference key="2">
    <citation type="journal article" date="2003" name="DNA Res.">
        <title>Prediction of the coding sequences of mouse homologues of KIAA gene: II. The complete nucleotide sequences of 400 mouse KIAA-homologous cDNAs identified by screening of terminal sequences of cDNA clones randomly sampled from size-fractionated libraries.</title>
        <authorList>
            <person name="Okazaki N."/>
            <person name="Kikuno R."/>
            <person name="Ohara R."/>
            <person name="Inamoto S."/>
            <person name="Aizawa H."/>
            <person name="Yuasa S."/>
            <person name="Nakajima D."/>
            <person name="Nagase T."/>
            <person name="Ohara O."/>
            <person name="Koga H."/>
        </authorList>
    </citation>
    <scope>NUCLEOTIDE SEQUENCE [MRNA] OF 1028-2792</scope>
    <source>
        <tissue>Brain</tissue>
    </source>
</reference>
<reference key="3">
    <citation type="journal article" date="2004" name="Genome Res.">
        <title>The status, quality, and expansion of the NIH full-length cDNA project: the Mammalian Gene Collection (MGC).</title>
        <authorList>
            <consortium name="The MGC Project Team"/>
        </authorList>
    </citation>
    <scope>NUCLEOTIDE SEQUENCE [LARGE SCALE MRNA] OF 1292-2792</scope>
    <source>
        <strain>FVB/N-3</strain>
        <tissue>Eye</tissue>
        <tissue>Liver</tissue>
        <tissue>Mammary gland</tissue>
    </source>
</reference>
<reference key="4">
    <citation type="journal article" date="2005" name="Science">
        <title>The transcriptional landscape of the mammalian genome.</title>
        <authorList>
            <person name="Carninci P."/>
            <person name="Kasukawa T."/>
            <person name="Katayama S."/>
            <person name="Gough J."/>
            <person name="Frith M.C."/>
            <person name="Maeda N."/>
            <person name="Oyama R."/>
            <person name="Ravasi T."/>
            <person name="Lenhard B."/>
            <person name="Wells C."/>
            <person name="Kodzius R."/>
            <person name="Shimokawa K."/>
            <person name="Bajic V.B."/>
            <person name="Brenner S.E."/>
            <person name="Batalov S."/>
            <person name="Forrest A.R."/>
            <person name="Zavolan M."/>
            <person name="Davis M.J."/>
            <person name="Wilming L.G."/>
            <person name="Aidinis V."/>
            <person name="Allen J.E."/>
            <person name="Ambesi-Impiombato A."/>
            <person name="Apweiler R."/>
            <person name="Aturaliya R.N."/>
            <person name="Bailey T.L."/>
            <person name="Bansal M."/>
            <person name="Baxter L."/>
            <person name="Beisel K.W."/>
            <person name="Bersano T."/>
            <person name="Bono H."/>
            <person name="Chalk A.M."/>
            <person name="Chiu K.P."/>
            <person name="Choudhary V."/>
            <person name="Christoffels A."/>
            <person name="Clutterbuck D.R."/>
            <person name="Crowe M.L."/>
            <person name="Dalla E."/>
            <person name="Dalrymple B.P."/>
            <person name="de Bono B."/>
            <person name="Della Gatta G."/>
            <person name="di Bernardo D."/>
            <person name="Down T."/>
            <person name="Engstrom P."/>
            <person name="Fagiolini M."/>
            <person name="Faulkner G."/>
            <person name="Fletcher C.F."/>
            <person name="Fukushima T."/>
            <person name="Furuno M."/>
            <person name="Futaki S."/>
            <person name="Gariboldi M."/>
            <person name="Georgii-Hemming P."/>
            <person name="Gingeras T.R."/>
            <person name="Gojobori T."/>
            <person name="Green R.E."/>
            <person name="Gustincich S."/>
            <person name="Harbers M."/>
            <person name="Hayashi Y."/>
            <person name="Hensch T.K."/>
            <person name="Hirokawa N."/>
            <person name="Hill D."/>
            <person name="Huminiecki L."/>
            <person name="Iacono M."/>
            <person name="Ikeo K."/>
            <person name="Iwama A."/>
            <person name="Ishikawa T."/>
            <person name="Jakt M."/>
            <person name="Kanapin A."/>
            <person name="Katoh M."/>
            <person name="Kawasawa Y."/>
            <person name="Kelso J."/>
            <person name="Kitamura H."/>
            <person name="Kitano H."/>
            <person name="Kollias G."/>
            <person name="Krishnan S.P."/>
            <person name="Kruger A."/>
            <person name="Kummerfeld S.K."/>
            <person name="Kurochkin I.V."/>
            <person name="Lareau L.F."/>
            <person name="Lazarevic D."/>
            <person name="Lipovich L."/>
            <person name="Liu J."/>
            <person name="Liuni S."/>
            <person name="McWilliam S."/>
            <person name="Madan Babu M."/>
            <person name="Madera M."/>
            <person name="Marchionni L."/>
            <person name="Matsuda H."/>
            <person name="Matsuzawa S."/>
            <person name="Miki H."/>
            <person name="Mignone F."/>
            <person name="Miyake S."/>
            <person name="Morris K."/>
            <person name="Mottagui-Tabar S."/>
            <person name="Mulder N."/>
            <person name="Nakano N."/>
            <person name="Nakauchi H."/>
            <person name="Ng P."/>
            <person name="Nilsson R."/>
            <person name="Nishiguchi S."/>
            <person name="Nishikawa S."/>
            <person name="Nori F."/>
            <person name="Ohara O."/>
            <person name="Okazaki Y."/>
            <person name="Orlando V."/>
            <person name="Pang K.C."/>
            <person name="Pavan W.J."/>
            <person name="Pavesi G."/>
            <person name="Pesole G."/>
            <person name="Petrovsky N."/>
            <person name="Piazza S."/>
            <person name="Reed J."/>
            <person name="Reid J.F."/>
            <person name="Ring B.Z."/>
            <person name="Ringwald M."/>
            <person name="Rost B."/>
            <person name="Ruan Y."/>
            <person name="Salzberg S.L."/>
            <person name="Sandelin A."/>
            <person name="Schneider C."/>
            <person name="Schoenbach C."/>
            <person name="Sekiguchi K."/>
            <person name="Semple C.A."/>
            <person name="Seno S."/>
            <person name="Sessa L."/>
            <person name="Sheng Y."/>
            <person name="Shibata Y."/>
            <person name="Shimada H."/>
            <person name="Shimada K."/>
            <person name="Silva D."/>
            <person name="Sinclair B."/>
            <person name="Sperling S."/>
            <person name="Stupka E."/>
            <person name="Sugiura K."/>
            <person name="Sultana R."/>
            <person name="Takenaka Y."/>
            <person name="Taki K."/>
            <person name="Tammoja K."/>
            <person name="Tan S.L."/>
            <person name="Tang S."/>
            <person name="Taylor M.S."/>
            <person name="Tegner J."/>
            <person name="Teichmann S.A."/>
            <person name="Ueda H.R."/>
            <person name="van Nimwegen E."/>
            <person name="Verardo R."/>
            <person name="Wei C.L."/>
            <person name="Yagi K."/>
            <person name="Yamanishi H."/>
            <person name="Zabarovsky E."/>
            <person name="Zhu S."/>
            <person name="Zimmer A."/>
            <person name="Hide W."/>
            <person name="Bult C."/>
            <person name="Grimmond S.M."/>
            <person name="Teasdale R.D."/>
            <person name="Liu E.T."/>
            <person name="Brusic V."/>
            <person name="Quackenbush J."/>
            <person name="Wahlestedt C."/>
            <person name="Mattick J.S."/>
            <person name="Hume D.A."/>
            <person name="Kai C."/>
            <person name="Sasaki D."/>
            <person name="Tomaru Y."/>
            <person name="Fukuda S."/>
            <person name="Kanamori-Katayama M."/>
            <person name="Suzuki M."/>
            <person name="Aoki J."/>
            <person name="Arakawa T."/>
            <person name="Iida J."/>
            <person name="Imamura K."/>
            <person name="Itoh M."/>
            <person name="Kato T."/>
            <person name="Kawaji H."/>
            <person name="Kawagashira N."/>
            <person name="Kawashima T."/>
            <person name="Kojima M."/>
            <person name="Kondo S."/>
            <person name="Konno H."/>
            <person name="Nakano K."/>
            <person name="Ninomiya N."/>
            <person name="Nishio T."/>
            <person name="Okada M."/>
            <person name="Plessy C."/>
            <person name="Shibata K."/>
            <person name="Shiraki T."/>
            <person name="Suzuki S."/>
            <person name="Tagami M."/>
            <person name="Waki K."/>
            <person name="Watahiki A."/>
            <person name="Okamura-Oho Y."/>
            <person name="Suzuki H."/>
            <person name="Kawai J."/>
            <person name="Hayashizaki Y."/>
        </authorList>
    </citation>
    <scope>NUCLEOTIDE SEQUENCE [LARGE SCALE MRNA] OF 2483-2792</scope>
    <source>
        <strain>C57BL/6J</strain>
        <tissue>Liver</tissue>
    </source>
</reference>
<reference key="5">
    <citation type="journal article" date="2005" name="Mol. Cell. Biol.">
        <title>A family of mammalian E3 ubiquitin ligases that contain the UBR box motif and recognize N-degrons.</title>
        <authorList>
            <person name="Tasaki T."/>
            <person name="Mulder L.C.F."/>
            <person name="Iwamatsu A."/>
            <person name="Lee M.J."/>
            <person name="Davydov I.V."/>
            <person name="Varshavsky A."/>
            <person name="Muesing M."/>
            <person name="Kwon Y.T."/>
        </authorList>
    </citation>
    <scope>FUNCTION</scope>
    <scope>TISSUE SPECIFICITY</scope>
    <scope>IDENTIFICATION BY MASS SPECTROMETRY</scope>
</reference>
<reference key="6">
    <citation type="journal article" date="2009" name="J. Biol. Chem.">
        <title>The substrate recognition domains of the N-end rule pathway.</title>
        <authorList>
            <person name="Tasaki T."/>
            <person name="Zakrzewska A."/>
            <person name="Dudgeon D.D."/>
            <person name="Jiang Y."/>
            <person name="Lazo J.S."/>
            <person name="Kwon Y.T."/>
        </authorList>
    </citation>
    <scope>FUNCTION</scope>
    <scope>CATALYTIC ACTIVITY</scope>
    <scope>PATHWAY</scope>
    <scope>DOMAIN</scope>
</reference>
<reference key="7">
    <citation type="journal article" date="2010" name="Cell">
        <title>A tissue-specific atlas of mouse protein phosphorylation and expression.</title>
        <authorList>
            <person name="Huttlin E.L."/>
            <person name="Jedrychowski M.P."/>
            <person name="Elias J.E."/>
            <person name="Goswami T."/>
            <person name="Rad R."/>
            <person name="Beausoleil S.A."/>
            <person name="Villen J."/>
            <person name="Haas W."/>
            <person name="Sowa M.E."/>
            <person name="Gygi S.P."/>
        </authorList>
    </citation>
    <scope>PHOSPHORYLATION [LARGE SCALE ANALYSIS] AT SER-321</scope>
    <scope>IDENTIFICATION BY MASS SPECTROMETRY [LARGE SCALE ANALYSIS]</scope>
    <source>
        <tissue>Brain</tissue>
        <tissue>Brown adipose tissue</tissue>
        <tissue>Heart</tissue>
        <tissue>Liver</tissue>
        <tissue>Lung</tissue>
        <tissue>Pancreas</tissue>
        <tissue>Spleen</tissue>
        <tissue>Testis</tissue>
    </source>
</reference>
<reference key="8">
    <citation type="journal article" date="2014" name="Mol. Cell. Proteomics">
        <title>Immunoaffinity enrichment and mass spectrometry analysis of protein methylation.</title>
        <authorList>
            <person name="Guo A."/>
            <person name="Gu H."/>
            <person name="Zhou J."/>
            <person name="Mulhern D."/>
            <person name="Wang Y."/>
            <person name="Lee K.A."/>
            <person name="Yang V."/>
            <person name="Aguiar M."/>
            <person name="Kornhauser J."/>
            <person name="Jia X."/>
            <person name="Ren J."/>
            <person name="Beausoleil S.A."/>
            <person name="Silva J.C."/>
            <person name="Vemulapalli V."/>
            <person name="Bedford M.T."/>
            <person name="Comb M.J."/>
        </authorList>
    </citation>
    <scope>IDENTIFICATION BY MASS SPECTROMETRY [LARGE SCALE ANALYSIS]</scope>
    <source>
        <tissue>Embryo</tissue>
    </source>
</reference>
<reference key="9">
    <citation type="journal article" date="2016" name="PLoS ONE">
        <title>Use of a Conditional Ubr5 Mutant Allele to Investigate the Role of an N-End Rule Ubiquitin-Protein Ligase in Hedgehog Signalling and Embryonic Limb Development.</title>
        <authorList>
            <person name="Kinsella E."/>
            <person name="Dora N."/>
            <person name="Mellis D."/>
            <person name="Lettice L."/>
            <person name="Deveney P."/>
            <person name="Hill R."/>
            <person name="Ditzel M."/>
        </authorList>
    </citation>
    <scope>FUNCTION</scope>
    <scope>DISRUPTION PHENOTYPE</scope>
</reference>
<reference key="10">
    <citation type="journal article" date="2021" name="PLoS Genet.">
        <title>Ubiquitin-protein ligase Ubr5 cooperates with hedgehog signalling to promote skeletal tissue homeostasis.</title>
        <authorList>
            <person name="Mellis D."/>
            <person name="Staines K.A."/>
            <person name="Peluso S."/>
            <person name="Georgiou I.C."/>
            <person name="Dora N."/>
            <person name="Kubiak M."/>
            <person name="Van't Hof R."/>
            <person name="Grillo M."/>
            <person name="Farquharson C."/>
            <person name="Kinsella E."/>
            <person name="Thornburn A."/>
            <person name="Ralston S.H."/>
            <person name="Salter D.M."/>
            <person name="Riobo-Del Galdo N.A."/>
            <person name="Hill R.E."/>
            <person name="Ditzel M."/>
        </authorList>
    </citation>
    <scope>FUNCTION</scope>
    <scope>DISRUPTION PHENOTYPE</scope>
</reference>
<accession>Q80TP3</accession>
<accession>Q698K9</accession>
<accession>Q6PEQ8</accession>
<accession>Q6PFQ9</accession>
<accession>Q80VL4</accession>
<accession>Q810V6</accession>
<accession>Q9CXE9</accession>
<feature type="initiator methionine" description="Removed" evidence="1">
    <location>
        <position position="1"/>
    </location>
</feature>
<feature type="chain" id="PRO_0000086932" description="E3 ubiquitin-protein ligase UBR5">
    <location>
        <begin position="2"/>
        <end position="2792"/>
    </location>
</feature>
<feature type="domain" description="UBA" evidence="3">
    <location>
        <begin position="184"/>
        <end position="226"/>
    </location>
</feature>
<feature type="domain" description="PABC" evidence="5">
    <location>
        <begin position="2371"/>
        <end position="2448"/>
    </location>
</feature>
<feature type="domain" description="HECT" evidence="2">
    <location>
        <begin position="2455"/>
        <end position="2792"/>
    </location>
</feature>
<feature type="zinc finger region" description="UBR-type" evidence="4">
    <location>
        <begin position="1171"/>
        <end position="1239"/>
    </location>
</feature>
<feature type="region of interest" description="Disordered" evidence="6">
    <location>
        <begin position="77"/>
        <end position="175"/>
    </location>
</feature>
<feature type="region of interest" description="Disordered" evidence="6">
    <location>
        <begin position="322"/>
        <end position="347"/>
    </location>
</feature>
<feature type="region of interest" description="Disordered" evidence="6">
    <location>
        <begin position="577"/>
        <end position="642"/>
    </location>
</feature>
<feature type="region of interest" description="Disordered" evidence="6">
    <location>
        <begin position="993"/>
        <end position="1029"/>
    </location>
</feature>
<feature type="region of interest" description="Disordered" evidence="6">
    <location>
        <begin position="1046"/>
        <end position="1069"/>
    </location>
</feature>
<feature type="region of interest" description="Disordered" evidence="6">
    <location>
        <begin position="1293"/>
        <end position="1312"/>
    </location>
</feature>
<feature type="region of interest" description="Disordered" evidence="6">
    <location>
        <begin position="1509"/>
        <end position="1734"/>
    </location>
</feature>
<feature type="region of interest" description="Disordered" evidence="6">
    <location>
        <begin position="1853"/>
        <end position="1884"/>
    </location>
</feature>
<feature type="region of interest" description="Disordered" evidence="6">
    <location>
        <begin position="1978"/>
        <end position="2015"/>
    </location>
</feature>
<feature type="region of interest" description="Disordered" evidence="6">
    <location>
        <begin position="2111"/>
        <end position="2137"/>
    </location>
</feature>
<feature type="region of interest" description="Disordered" evidence="6">
    <location>
        <begin position="2317"/>
        <end position="2387"/>
    </location>
</feature>
<feature type="region of interest" description="Disordered" evidence="6">
    <location>
        <begin position="2467"/>
        <end position="2494"/>
    </location>
</feature>
<feature type="compositionally biased region" description="Basic and acidic residues" evidence="6">
    <location>
        <begin position="77"/>
        <end position="88"/>
    </location>
</feature>
<feature type="compositionally biased region" description="Low complexity" evidence="6">
    <location>
        <begin position="94"/>
        <end position="111"/>
    </location>
</feature>
<feature type="compositionally biased region" description="Gly residues" evidence="6">
    <location>
        <begin position="135"/>
        <end position="144"/>
    </location>
</feature>
<feature type="compositionally biased region" description="Basic and acidic residues" evidence="6">
    <location>
        <begin position="322"/>
        <end position="341"/>
    </location>
</feature>
<feature type="compositionally biased region" description="Basic and acidic residues" evidence="6">
    <location>
        <begin position="577"/>
        <end position="598"/>
    </location>
</feature>
<feature type="compositionally biased region" description="Low complexity" evidence="6">
    <location>
        <begin position="608"/>
        <end position="622"/>
    </location>
</feature>
<feature type="compositionally biased region" description="Pro residues" evidence="6">
    <location>
        <begin position="1011"/>
        <end position="1027"/>
    </location>
</feature>
<feature type="compositionally biased region" description="Polar residues" evidence="6">
    <location>
        <begin position="1046"/>
        <end position="1067"/>
    </location>
</feature>
<feature type="compositionally biased region" description="Low complexity" evidence="6">
    <location>
        <begin position="1518"/>
        <end position="1531"/>
    </location>
</feature>
<feature type="compositionally biased region" description="Polar residues" evidence="6">
    <location>
        <begin position="1532"/>
        <end position="1547"/>
    </location>
</feature>
<feature type="compositionally biased region" description="Acidic residues" evidence="6">
    <location>
        <begin position="1553"/>
        <end position="1568"/>
    </location>
</feature>
<feature type="compositionally biased region" description="Acidic residues" evidence="6">
    <location>
        <begin position="1599"/>
        <end position="1608"/>
    </location>
</feature>
<feature type="compositionally biased region" description="Polar residues" evidence="6">
    <location>
        <begin position="1623"/>
        <end position="1632"/>
    </location>
</feature>
<feature type="compositionally biased region" description="Low complexity" evidence="6">
    <location>
        <begin position="1635"/>
        <end position="1651"/>
    </location>
</feature>
<feature type="compositionally biased region" description="Low complexity" evidence="6">
    <location>
        <begin position="1662"/>
        <end position="1675"/>
    </location>
</feature>
<feature type="compositionally biased region" description="Low complexity" evidence="6">
    <location>
        <begin position="1720"/>
        <end position="1734"/>
    </location>
</feature>
<feature type="compositionally biased region" description="Basic and acidic residues" evidence="6">
    <location>
        <begin position="1873"/>
        <end position="1884"/>
    </location>
</feature>
<feature type="compositionally biased region" description="Acidic residues" evidence="6">
    <location>
        <begin position="1979"/>
        <end position="1992"/>
    </location>
</feature>
<feature type="compositionally biased region" description="Basic and acidic residues" evidence="6">
    <location>
        <begin position="2326"/>
        <end position="2342"/>
    </location>
</feature>
<feature type="compositionally biased region" description="Basic and acidic residues" evidence="6">
    <location>
        <begin position="2350"/>
        <end position="2362"/>
    </location>
</feature>
<feature type="compositionally biased region" description="Acidic residues" evidence="6">
    <location>
        <begin position="2483"/>
        <end position="2493"/>
    </location>
</feature>
<feature type="active site" description="Glycyl thioester intermediate" evidence="2">
    <location>
        <position position="2761"/>
    </location>
</feature>
<feature type="modified residue" description="N-acetylthreonine" evidence="1">
    <location>
        <position position="2"/>
    </location>
</feature>
<feature type="modified residue" description="Phosphoserine" evidence="1">
    <location>
        <position position="110"/>
    </location>
</feature>
<feature type="modified residue" description="Phosphoserine" evidence="16">
    <location>
        <position position="321"/>
    </location>
</feature>
<feature type="modified residue" description="Phosphoserine" evidence="1">
    <location>
        <position position="346"/>
    </location>
</feature>
<feature type="modified residue" description="Phosphoserine" evidence="1">
    <location>
        <position position="572"/>
    </location>
</feature>
<feature type="modified residue" description="Phosphoserine" evidence="1">
    <location>
        <position position="606"/>
    </location>
</feature>
<feature type="modified residue" description="Phosphothreonine" evidence="1">
    <location>
        <position position="631"/>
    </location>
</feature>
<feature type="modified residue" description="Phosphoserine" evidence="1">
    <location>
        <position position="802"/>
    </location>
</feature>
<feature type="modified residue" description="Phosphoserine" evidence="1">
    <location>
        <position position="922"/>
    </location>
</feature>
<feature type="modified residue" description="Phosphoserine" evidence="1">
    <location>
        <position position="1012"/>
    </location>
</feature>
<feature type="modified residue" description="Phosphothreonine" evidence="1">
    <location>
        <position position="1109"/>
    </location>
</feature>
<feature type="modified residue" description="Phosphothreonine" evidence="1">
    <location>
        <position position="1129"/>
    </location>
</feature>
<feature type="modified residue" description="Phosphoserine" evidence="1">
    <location>
        <position position="1221"/>
    </location>
</feature>
<feature type="modified residue" description="Phosphoserine" evidence="1">
    <location>
        <position position="1302"/>
    </location>
</feature>
<feature type="modified residue" description="Phosphoserine" evidence="1">
    <location>
        <position position="1349"/>
    </location>
</feature>
<feature type="modified residue" description="Phosphoserine" evidence="1">
    <location>
        <position position="1369"/>
    </location>
</feature>
<feature type="modified residue" description="Phosphoserine" evidence="1">
    <location>
        <position position="1475"/>
    </location>
</feature>
<feature type="modified residue" description="Phosphoserine" evidence="1">
    <location>
        <position position="1543"/>
    </location>
</feature>
<feature type="modified residue" description="Phosphothreonine" evidence="1">
    <location>
        <position position="1730"/>
    </location>
</feature>
<feature type="modified residue" description="Phosphoserine" evidence="1">
    <location>
        <position position="1735"/>
    </location>
</feature>
<feature type="modified residue" description="Phosphotyrosine" evidence="1">
    <location>
        <position position="1740"/>
    </location>
</feature>
<feature type="modified residue" description="Phosphoserine" evidence="1">
    <location>
        <position position="1774"/>
    </location>
</feature>
<feature type="modified residue" description="Phosphothreonine" evidence="1">
    <location>
        <position position="1963"/>
    </location>
</feature>
<feature type="modified residue" description="Phosphoserine" evidence="1">
    <location>
        <position position="1984"/>
    </location>
</feature>
<feature type="modified residue" description="Phosphoserine" evidence="1">
    <location>
        <position position="2020"/>
    </location>
</feature>
<feature type="modified residue" description="Phosphoserine" evidence="1">
    <location>
        <position position="2022"/>
    </location>
</feature>
<feature type="modified residue" description="Phosphothreonine" evidence="1">
    <location>
        <position position="2024"/>
    </location>
</feature>
<feature type="modified residue" description="Phosphoserine" evidence="1">
    <location>
        <position position="2070"/>
    </location>
</feature>
<feature type="modified residue" description="Phosphothreonine" evidence="1">
    <location>
        <position position="2207"/>
    </location>
</feature>
<feature type="modified residue" description="Phosphoserine" evidence="1">
    <location>
        <position position="2235"/>
    </location>
</feature>
<feature type="modified residue" description="Phosphoserine" evidence="1">
    <location>
        <position position="2283"/>
    </location>
</feature>
<feature type="modified residue" description="Phosphoserine" evidence="1">
    <location>
        <position position="2463"/>
    </location>
</feature>
<feature type="modified residue" description="Phosphoserine" evidence="1">
    <location>
        <position position="2477"/>
    </location>
</feature>
<feature type="modified residue" description="Phosphoserine" evidence="1">
    <location>
        <position position="2479"/>
    </location>
</feature>
<feature type="sequence conflict" description="In Ref. 1; AAT28194." evidence="15" ref="1">
    <original>S</original>
    <variation>P</variation>
    <location>
        <position position="1121"/>
    </location>
</feature>
<evidence type="ECO:0000250" key="1">
    <source>
        <dbReference type="UniProtKB" id="O95071"/>
    </source>
</evidence>
<evidence type="ECO:0000255" key="2">
    <source>
        <dbReference type="PROSITE-ProRule" id="PRU00104"/>
    </source>
</evidence>
<evidence type="ECO:0000255" key="3">
    <source>
        <dbReference type="PROSITE-ProRule" id="PRU00212"/>
    </source>
</evidence>
<evidence type="ECO:0000255" key="4">
    <source>
        <dbReference type="PROSITE-ProRule" id="PRU00508"/>
    </source>
</evidence>
<evidence type="ECO:0000255" key="5">
    <source>
        <dbReference type="PROSITE-ProRule" id="PRU00641"/>
    </source>
</evidence>
<evidence type="ECO:0000256" key="6">
    <source>
        <dbReference type="SAM" id="MobiDB-lite"/>
    </source>
</evidence>
<evidence type="ECO:0000269" key="7">
    <source>
    </source>
</evidence>
<evidence type="ECO:0000269" key="8">
    <source>
    </source>
</evidence>
<evidence type="ECO:0000269" key="9">
    <source>
    </source>
</evidence>
<evidence type="ECO:0000269" key="10">
    <source>
    </source>
</evidence>
<evidence type="ECO:0000269" key="11">
    <source>
    </source>
</evidence>
<evidence type="ECO:0000303" key="12">
    <source>
    </source>
</evidence>
<evidence type="ECO:0000303" key="13">
    <source>
    </source>
</evidence>
<evidence type="ECO:0000303" key="14">
    <source>
    </source>
</evidence>
<evidence type="ECO:0000305" key="15"/>
<evidence type="ECO:0007744" key="16">
    <source>
    </source>
</evidence>
<proteinExistence type="evidence at protein level"/>
<gene>
    <name evidence="14" type="primary">Ubr5</name>
    <name evidence="13" type="synonym">Edd</name>
    <name type="synonym">Edd1</name>
    <name evidence="12" type="synonym">Kiaa0896</name>
</gene>
<protein>
    <recommendedName>
        <fullName>E3 ubiquitin-protein ligase UBR5</fullName>
        <ecNumber evidence="9">2.3.2.26</ecNumber>
    </recommendedName>
    <alternativeName>
        <fullName>E3 ubiquitin-protein ligase, HECT domain-containing 1</fullName>
    </alternativeName>
    <alternativeName>
        <fullName evidence="13">Hyperplastic discs protein homolog</fullName>
    </alternativeName>
</protein>
<keyword id="KW-0007">Acetylation</keyword>
<keyword id="KW-0963">Cytoplasm</keyword>
<keyword id="KW-0227">DNA damage</keyword>
<keyword id="KW-0234">DNA repair</keyword>
<keyword id="KW-0479">Metal-binding</keyword>
<keyword id="KW-0539">Nucleus</keyword>
<keyword id="KW-0597">Phosphoprotein</keyword>
<keyword id="KW-1185">Reference proteome</keyword>
<keyword id="KW-0808">Transferase</keyword>
<keyword id="KW-0833">Ubl conjugation pathway</keyword>
<keyword id="KW-0862">Zinc</keyword>
<keyword id="KW-0863">Zinc-finger</keyword>
<name>UBR5_MOUSE</name>
<sequence>MTSIHFVVHPLPGTEDQLNDRLREVSEKLNKYNLNSHPPLNVLEQATIKQCVVGPNHAAFLLEDGRICRIGFSVQPDRLELGKPDNNDGSKLNSSSGTGRTSRPGRTSDSPWFLSGSETLGRLAGNTLGSRWSSGVGGSGGGSSGRSSAGARDSRRQTRVIRTGRDRGSGLLGSQPQPVIPASVIPEELISQAQVVLQGKSRSVIIRELQRTNLDVNLAVNNLLSRDDEDGDDGDDTASESYLPGEDLMSLLDADIHSAHPSVIIDADAMFSEDISYFGYPSFRRSSLSRLGSSRERDSELLRERESVLRLRERRWLDGASFDNERGSTSKEGESNPDKKNTPVQSPVSLGEDLQWWPDKDGTKFTCIGALYSELLAVSSKGELYQWKWSESEPYRNAQNPSLHHPRATFLGLTNEKIVLLSANSIRATVATENNKVATWVDETLSSVASKLEHTAQTYSELQGERIVSLHCCALYTCAQLENNLYWWGVVPFSQRKKMLEKARAKNKKPKSSAGISSMPNITVGTQVCLRNNPLYHAGAVAFSISAGIPKVGVLMESVWNMNDSCRFQLRSPESLKSMEKASKTLETKPESKQEPVKTEMGPPPSPASTCSDASSIASSASMPYKRRRSTPAPREEEKVNEEQWPLREVVFVEDVKNVPVGKVLKVDGAYVAVKFPGTSTNTTCQNSSGPDADPSSLLQDCRLLRIDELQVVKTGGTPKVPDCFQRTPKKLCIPEKTEILAVNVDSKGVHAVLKTGSWVRYCVFDLATGKAEQENNFPTSSVAFLGQDERSVAIFTAGQESPIVLRDGNGTIYPMAKDCMGGIRDPDWLDLPPISSLGMGVHSLINLPANSTIKKKAAIIIMAVEKQTLMQHILRCDYEACRQYLVNLEQAVVLEQNRQMLQTFISHRCDGNRNILHACVSVCFPTSNKETKEEEEAERSERNTFAERLSAVEAIANAISVVSSNGPGNRAGSSNSRSLRLREMMRRSLRAAGLGRHEAGASSSDHQDPVSPPIAPPSWVPDPPSMDPDGDIDFILAPAVGSLTTAATGSGQGPSTSTIPGPSTEPSVVESKDRKANAHFILKLLCDSAVLQPYLRELLSAKDARGMTPFMSAVSGRAYSAAITILETAQKIAKAEVSASEKEEDVFMGMVCPSGTNPDDSPLYVLCCNDTCSFTWTGAEHINQDIFECRTCGLLESLCCCTECARVCHKGHDCKLKRTSPTAYCDCWEKCKCKTLIAGQKSARLDLLYRLLTATNLVTLPNSRGEHLLLFLVQTVARQTVEHCQYRPPRIREDRNRKTASPEDSDMPDHDLEPPRFAQLALERVLQDWNALRSMIMFGSQENKDPLSASSRIGHLLPEEQVYLNQQSGTIRLDCFTHCLIVKCTADILLLDTLLGTLVKELQNKYTPGRREEAIAVTMRFLRSVARVFVILSVEMASSKKKNNFIPQPIGKCKRVFQALLPYAVEELCNVAESLIVPVRMGIARPTAPFTLASTSIDAMQGSEELFSVEPLPPRPSSDQASSSSQSQSSYIIRNPQQRRISQSQPVRGRDEEQDDIVSADVEEVEVVEGVAGEEDHHDEQEEHGEENAEAEGHHDEHDEDGSDMELDLLAAAETESDSESNHSNQDNASGRRSVVTAATAGSEAGASSVPAFFSEDDSQSNDSSDSDSSSSQSDDIEQETFMLDEPLERTTNSSHANGAAQAPRSMQWAVRNPQHQRAASTAPSSTSTPAASSAGLIYIDPSNLRRSGTISTSAAAAAAALEASNASSYLTSASSLARAYSIVIRQISDLMGLIPKYNHLVYSQIPAAVKLTYQDAVNLQNYVEEKLIPTWNWMVSVMDSTEAQLRYGSALASAGDPGHPNHPLHASQNSARRERMTAREEASLRTLEGRRRATLLSARQGMMSARGDFLNYALSLMRSHNDEHSDVLPVLDVCSLKHVAYVFQALIYWIKAMNQQTTLDTPQLERKRTRELLELGIDNEDSEHENDDDTSQSATLNDKDDDSLPAETGQNHPFFRRSDSMTFLGCIPPNPFEVPLAEAIPLADQPHLLQPNARKEDLFGRPSQGLYSSSAGSGKCIVEVTMDRNCLEVLPTKMSYAANLKNVMNMQNRQKKEGEEQSLLAEEADSSKPGPSAPDVAAQLKSSLLAEIGLTESEGPPLTSFRPQCSFMGMVISHDMLLGRWRLSLELFGRVFMEDVGAEPGSILTELGGFEVKESKFRREMEKLRNQQSRDLSLEVDRDRDLLIQQTMRQLNNHFGRRCATTPMAVHRVKVTFKDEPGEGSGVARSFYTAIAQAFLSNEKLPNLDCIQNANKGTHTSLMQRLRNRGERDREREREREMRRSSGLRAGSRRDRDRDFRRQLSIDTRPFRPASEGNPSDDPDPLPAHRQALGERLYPRVQAMQPAFASKITGMLLELSPAQLLLLLASEDSLRARVDEAMELIIAHGRENGADSILDLGLLDSSEKVQENRKRHGSSRSVVDMDLEDTDDGDDNAPLFYQPGKRGFYTPRPGKNTEARLNCFRNIGRILGLCLLQNELCPITLNRHVIKVLLGRKVNWHDFAFFDPVMYESLRQLILASQSSDADAVFSAMDLAFAIDLCKEEGGGQVELIPNGVNIPVTPQNVYEYVRKYAEHRMLVVAEQPLHAMRKGLLDVLPKNSLEDLTAEDFRLLVNGCGEVNVQMLISFTSFNDESGENAEKLLQFKRWFWSIVEKMSMTERQDLVYFWTSSPSLPASEEGFQPMPSITIRPPDDQHLPTANTCISRLYVPLYSSKQILKQKLLLAIKTKNFGFV</sequence>
<comment type="function">
    <text evidence="1 7 8 9 10 11">E3 ubiquitin-protein ligase involved in different protein quality control pathways in the cytoplasm and nucleus (PubMed:16055722, PubMed:19008229). Mainly acts as a ubiquitin chain elongator that extends pre-ubiquitinated substrates (By similarity). Component of the N-end rule pathway: ubiquitinates proteins bearing specific N-terminal residues that are destabilizing according to the N-end rule, leading to their degradation (PubMed:16055722, PubMed:19008229). Recognizes type-1 N-degrons, containing positively charged amino acids (Arg, Lys and His) (PubMed:16055722, PubMed:19008229). Together with UBR4, part of a cytoplasm protein quality control pathway that prevents protein aggregation by catalyzing assembly of heterotypic 'Lys-11'-/'Lys-48'-linked branched ubiquitin chains on aggregated proteins, leading to substrate recognition by the segregase p97/VCP and degradation by the proteasome: UBR5 is probably branching multiple 'Lys-48'-linked chains of substrates initially modified with mixed conjugates by UBR4 (By similarity). Together with ITCH, catalyzes 'Lys-48'-/'Lys-63'-branched ubiquitination of TXNIP, leading to its degradation: UBR5 mediates branching of 'Lys-48'-linked chains of substrates initially modified with 'Lys-63'-linked conjugates by ITCH (By similarity). Catalytic component of a nuclear protein quality control pathway that mediates ubiquitination and degradation of unpaired transcription factors (i.e. transcription factors that are not assembled into functional multiprotein complexes): specifically recognizes and binds degrons that are not accessible when transcription regulators are associated with their coactivators (By similarity). Ubiquitinates various unpaired transcription regulator (MYC, SUPT4H1, SUPT5H, CDC20 and MCRS1), as well as ligand-bound nuclear receptors (ESR1, NR1H3, NR3C1, PGR, RARA, RXRA AND VDR) that are not associated with their nuclear receptor coactivators (NCOAs) (By similarity). Involved in maturation and/or transcriptional regulation of mRNA by mediating polyubiquitination and activation of CDK9 (By similarity). Also acts as a regulator of DNA damage response by acting as a suppressor of RNF168, an E3 ubiquitin-protein ligase that promotes accumulation of 'Lys-63'-linked histone H2A and H2AX at DNA damage sites, thereby acting as a guard against excessive spreading of ubiquitinated chromatin at damaged chromosomes (By similarity). Regulates DNA topoisomerase II binding protein (TopBP1) in the DNA damage response (By similarity). Ubiquitinates acetylated PCK1 (By similarity). Acts as a positive regulator of the canonical Wnt signaling pathway by mediating (1) ubiquitination and stabilization of CTNNB1, and (2) 'Lys-48'-linked ubiquitination and degradation of TLE3 (By similarity). Promotes disassembly of the mitotic checkpoint complex (MCC) from the APC/C complex by catalyzing ubiquitination of BUB1B, BUB3 and CDC20 (By similarity). Plays an essential role in extraembryonic development (PubMed:15282321). Required for the maintenance of skeletal tissue homeostasis by acting as an inhibitor of hedgehog (HH) signaling (PubMed:27299863, PubMed:33819267).</text>
</comment>
<comment type="catalytic activity">
    <reaction evidence="9">
        <text>S-ubiquitinyl-[E2 ubiquitin-conjugating enzyme]-L-cysteine + [acceptor protein]-L-lysine = [E2 ubiquitin-conjugating enzyme]-L-cysteine + N(6)-ubiquitinyl-[acceptor protein]-L-lysine.</text>
        <dbReference type="EC" id="2.3.2.26"/>
    </reaction>
</comment>
<comment type="pathway">
    <text evidence="9">Protein modification; protein ubiquitination.</text>
</comment>
<comment type="subunit">
    <text evidence="1">Homotetramer; composed of a dimer of dimers. Associates with CDK9 and TFIIS/TCEA1 and forms a transcription regulatory complex made of CDK9, RNAP II, UBR5 and TFIIS/TCEA1 that can stimulate target gene transcription (e.g. gamma fibrinogen/FGG) by recruiting their promoters. Associates with the E3 ligase complex containing DYRK2, EDD/UBR5, DDB1 and DCAF1 proteins (EDVP complex). Binds TOPBP1. Interacts with PIH1D1. Interacts with CIB1.</text>
</comment>
<comment type="interaction">
    <interactant intactId="EBI-2553642">
        <id>Q80TP3</id>
    </interactant>
    <interactant intactId="EBI-16131219">
        <id>Q3U2S4-1</id>
        <label>Otud5</label>
    </interactant>
    <organismsDiffer>false</organismsDiffer>
    <experiments>2</experiments>
</comment>
<comment type="subcellular location">
    <subcellularLocation>
        <location evidence="1">Nucleus</location>
    </subcellularLocation>
    <subcellularLocation>
        <location evidence="1">Cytoplasm</location>
    </subcellularLocation>
</comment>
<comment type="domain">
    <text evidence="9">The UBR-type zinc finger forms a pocket that mediates recognition of type 1 N-degrons.</text>
</comment>
<comment type="domain">
    <text evidence="1">The UBA domain recognizes and binds ubiquitin. It acts as an ubiquitin acceptor required to place 'Lys-48' of ubiquitin into the HECT domain activie site, thereby potentiating the E3 ubiquitin-protein ligase activity.</text>
</comment>
<comment type="disruption phenotype">
    <text evidence="7 10 11">Embryonic lethality at 10.5 dpc (PubMed:15282321). Embryos display delayed growth and development evident from 8.5 dpc onward, characterized by failed yolk sac and allantoic vascular development, along with defective chorioallantoic fusion (PubMed:15282321). Conditional deletion in limb bud mesenchyme leads to musculo-skeletal defects, characterized by spontaneous, progressive and tissue-specific patterns of ectopic chondrogenesis and ossification as well as articular cartilage degeneration and shedding (PubMed:33819267). In contrast, conditional deletion in limb bud mesenchyme does not affect patterning of the developing limb bud during embryogenesis (PubMed:27299863).</text>
</comment>
<comment type="similarity">
    <text evidence="15">Belongs to the UBR5 family.</text>
</comment>